<keyword id="KW-0002">3D-structure</keyword>
<keyword id="KW-0007">Acetylation</keyword>
<keyword id="KW-0013">ADP-ribosylation</keyword>
<keyword id="KW-0021">Allosteric enzyme</keyword>
<keyword id="KW-0025">Alternative splicing</keyword>
<keyword id="KW-0158">Chromosome</keyword>
<keyword id="KW-0227">DNA damage</keyword>
<keyword id="KW-0234">DNA repair</keyword>
<keyword id="KW-0238">DNA-binding</keyword>
<keyword id="KW-0328">Glycosyltransferase</keyword>
<keyword id="KW-0520">NAD</keyword>
<keyword id="KW-0548">Nucleotidyltransferase</keyword>
<keyword id="KW-0539">Nucleus</keyword>
<keyword id="KW-0597">Phosphoprotein</keyword>
<keyword id="KW-1267">Proteomics identification</keyword>
<keyword id="KW-1185">Reference proteome</keyword>
<keyword id="KW-0808">Transferase</keyword>
<sequence length="583" mass="66206">MAARRRRSTGGGRARALNESKRVNNGNTAPEDSSPAKKTRRCQRQESKKMPVAGGKANKDRTEDKQDGMPGRSWASKRVSESVKALLLKGKAPVDPECTAKVGKAHVYCEGNDVYDVMLNQTNLQFNNNKYYLIQLLEDDAQRNFSVWMRWGRVGKMGQHSLVACSGNLNKAKEIFQKKFLDKTKNNWEDREKFEKVPGKYDMLQMDYATNTQDEEETKKEESLKSPLKPESQLDLRVQELIKLICNVQAMEEMMMEMKYNTKKAPLGKLTVAQIKAGYQSLKKIEDCIRAGQHGRALMEACNEFYTRIPHDFGLRTPPLIRTQKELSEKIQLLEALGDIEIAIKLVKTELQSPEHPLDQHYRNLHCALRPLDHESYEFKVISQYLQSTHAPTHSDYTMTLLDLFEVEKDGEKEAFREDLHNRMLLWHGSRMSNWVGILSHGLRIAPPEAPITGYMFGKGIYFADMSSKSANYCFASRLKNTGLLLLSEVALGQCNELLEANPKAEGLLQGKHSTKGLGKMAPSSAHFVTLNGSTVPLGPASDTGILNPDGYTLNYNEYIVYNPNQVRMRYLLKVQFNFLQLW</sequence>
<feature type="chain" id="PRO_0000211327" description="Poly [ADP-ribose] polymerase 2">
    <location>
        <begin position="1"/>
        <end position="583"/>
    </location>
</feature>
<feature type="domain" description="WGR" evidence="4">
    <location>
        <begin position="104"/>
        <end position="201"/>
    </location>
</feature>
<feature type="domain" description="PARP alpha-helical" evidence="3">
    <location>
        <begin position="231"/>
        <end position="348"/>
    </location>
</feature>
<feature type="domain" description="PARP catalytic" evidence="2">
    <location>
        <begin position="356"/>
        <end position="583"/>
    </location>
</feature>
<feature type="region of interest" description="N-terminal region (NTR)" evidence="35">
    <location>
        <begin position="1"/>
        <end position="103"/>
    </location>
</feature>
<feature type="region of interest" description="Disordered" evidence="5">
    <location>
        <begin position="1"/>
        <end position="77"/>
    </location>
</feature>
<feature type="short sequence motif" description="Nuclear localization signal" evidence="9">
    <location>
        <begin position="21"/>
        <end position="22"/>
    </location>
</feature>
<feature type="short sequence motif" description="Nuclear localization signal" evidence="9">
    <location>
        <begin position="35"/>
        <end position="40"/>
    </location>
</feature>
<feature type="compositionally biased region" description="Basic and acidic residues" evidence="5">
    <location>
        <begin position="57"/>
        <end position="67"/>
    </location>
</feature>
<feature type="active site" description="For poly [ADP-ribose] polymerase activity" evidence="33 35 36">
    <location>
        <position position="558"/>
    </location>
</feature>
<feature type="binding site" evidence="16 43">
    <location>
        <begin position="428"/>
        <end position="430"/>
    </location>
    <ligand>
        <name>NAD(+)</name>
        <dbReference type="ChEBI" id="CHEBI:57540"/>
    </ligand>
</feature>
<feature type="binding site" evidence="16 43">
    <location>
        <position position="437"/>
    </location>
    <ligand>
        <name>NAD(+)</name>
        <dbReference type="ChEBI" id="CHEBI:57540"/>
    </ligand>
</feature>
<feature type="binding site" evidence="16 43">
    <location>
        <position position="444"/>
    </location>
    <ligand>
        <name>NAD(+)</name>
        <dbReference type="ChEBI" id="CHEBI:57540"/>
    </ligand>
</feature>
<feature type="binding site" evidence="16 43">
    <location>
        <position position="470"/>
    </location>
    <ligand>
        <name>NAD(+)</name>
        <dbReference type="ChEBI" id="CHEBI:57540"/>
    </ligand>
</feature>
<feature type="site" description="Cleavage; by caspase-8" evidence="1">
    <location>
        <begin position="207"/>
        <end position="208"/>
    </location>
</feature>
<feature type="modified residue" description="N6-acetyllysine" evidence="1">
    <location>
        <position position="37"/>
    </location>
</feature>
<feature type="modified residue" description="N6-acetyllysine" evidence="1">
    <location>
        <position position="38"/>
    </location>
</feature>
<feature type="modified residue" description="Phosphoserine" evidence="49">
    <location>
        <position position="226"/>
    </location>
</feature>
<feature type="modified residue" description="Phosphoserine" evidence="49">
    <location>
        <position position="232"/>
    </location>
</feature>
<feature type="splice variant" id="VSP_004537" description="In isoform 2." evidence="28">
    <location>
        <begin position="68"/>
        <end position="80"/>
    </location>
</feature>
<feature type="sequence variant" id="VAR_019174" description="In dbSNP:rs3093905." evidence="26">
    <original>S</original>
    <variation>N</variation>
    <location>
        <position position="161"/>
    </location>
</feature>
<feature type="sequence variant" id="VAR_019175" description="In dbSNP:rs3093906." evidence="26">
    <original>N</original>
    <variation>S</variation>
    <location>
        <position position="168"/>
    </location>
</feature>
<feature type="sequence variant" id="VAR_019176" description="In dbSNP:rs3093921." evidence="26">
    <original>D</original>
    <variation>G</variation>
    <location>
        <position position="235"/>
    </location>
</feature>
<feature type="sequence variant" id="VAR_019177" description="In dbSNP:rs3093925." evidence="26">
    <original>I</original>
    <variation>V</variation>
    <location>
        <position position="285"/>
    </location>
</feature>
<feature type="sequence variant" id="VAR_019178" description="In dbSNP:rs3093926." evidence="26">
    <original>R</original>
    <variation>Q</variation>
    <location>
        <position position="296"/>
    </location>
</feature>
<feature type="sequence variant" id="VAR_050462" description="In dbSNP:rs2275010.">
    <original>I</original>
    <variation>T</variation>
    <location>
        <position position="331"/>
    </location>
</feature>
<feature type="mutagenesis site" description="Reduced localization to the nucleus. Abolished localization to the nucleus; when associated with 37-A-A-38." evidence="9">
    <original>KR</original>
    <variation>AA</variation>
    <location>
        <begin position="21"/>
        <end position="22"/>
    </location>
</feature>
<feature type="mutagenesis site" description="Reduced localization to the nucleus. Abolished localization to the nucleus; when associated with 21-A-A-22." evidence="9">
    <original>KK</original>
    <variation>AA</variation>
    <location>
        <begin position="37"/>
        <end position="38"/>
    </location>
</feature>
<feature type="mutagenesis site" description="In PARP2-QFRD mutant; induces conformational change that bridges nucleosomes by binding to linker DNA ends and promotes interaction with HPF1." evidence="18">
    <original>QF</original>
    <variation>RD</variation>
    <location>
        <begin position="125"/>
        <end position="126"/>
    </location>
</feature>
<feature type="mutagenesis site" description="Decreased poly [ADP-ribose] polymerase activity. Impaired formation of a complex with damaged DNA." evidence="15">
    <original>N</original>
    <variation>A</variation>
    <location>
        <position position="127"/>
    </location>
</feature>
<feature type="mutagenesis site" description="Does not affect poly [ADP-ribose] polymerase activity." evidence="15">
    <original>N</original>
    <variation>A</variation>
    <location>
        <position position="128"/>
    </location>
</feature>
<feature type="mutagenesis site" description="Reduced recruitment to DNA damage sites. Abolished DNA-induced ADP-ribosyltransferase activity." evidence="9 20">
    <original>N</original>
    <variation>A</variation>
    <location>
        <position position="129"/>
    </location>
</feature>
<feature type="mutagenesis site" description="Decreased poly [ADP-ribose] polymerase activity." evidence="15">
    <original>K</original>
    <variation>A</variation>
    <location>
        <position position="130"/>
    </location>
</feature>
<feature type="mutagenesis site" description="Decreased poly [ADP-ribose] polymerase activity." evidence="15">
    <original>Y</original>
    <variation>F</variation>
    <location>
        <position position="132"/>
    </location>
</feature>
<feature type="mutagenesis site" description="Decreased poly [ADP-ribose] polymerase activity. Impaired formation of a complex with damaged DNA." evidence="15">
    <original>W</original>
    <variation>A</variation>
    <location>
        <position position="151"/>
    </location>
</feature>
<feature type="mutagenesis site" description="Abolished formation of a complex with core nucleosome and HPF1, leading to abolished ability to catalyze serine ADP-ribosylation of histones. Abolished DNA-induced ADP-ribosyltransferase activity. Abolished trapping at DNA damage sites upon binding to PARP inhibitors (PARPi)." evidence="15 17 20 25">
    <original>R</original>
    <variation>A</variation>
    <location>
        <position position="153"/>
    </location>
</feature>
<feature type="mutagenesis site" description="Abolished formation of a complex with core nucleosome and HPF1, leading to abolished ability to catalyze serine ADP-ribosylation of histones." evidence="17">
    <original>V</original>
    <variation>A</variation>
    <location>
        <position position="154"/>
    </location>
</feature>
<feature type="mutagenesis site" description="Decreased poly [ADP-ribose] polymerase activity." evidence="15">
    <original>Q</original>
    <variation>A</variation>
    <location>
        <position position="159"/>
    </location>
</feature>
<feature type="mutagenesis site" description="Decreased poly [ADP-ribose] polymerase activity. Impaired formation of a complex with damaged DNA." evidence="15">
    <original>K</original>
    <variation>A</variation>
    <location>
        <position position="183"/>
    </location>
</feature>
<feature type="mutagenesis site" description="Reduced DNA-induced ADP-ribosyltransferase activity." evidence="20">
    <original>Y</original>
    <variation>A</variation>
    <location>
        <position position="201"/>
    </location>
</feature>
<feature type="mutagenesis site" description="Reduced recruitment to DNA damage sites. Decreased poly [ADP-ribose] polymerase activity." evidence="9 15">
    <original>Y</original>
    <variation>F</variation>
    <location>
        <position position="201"/>
    </location>
</feature>
<feature type="mutagenesis site" description="Increased DNA-induced ADP-ribosyltransferase activity." evidence="20">
    <original>E</original>
    <variation>A</variation>
    <variation>R</variation>
    <location>
        <position position="286"/>
    </location>
</feature>
<feature type="mutagenesis site" description="Does not affect DNA-induced ADP-ribosyltransferase activity." evidence="20">
    <original>G</original>
    <variation>A</variation>
    <location>
        <position position="338"/>
    </location>
</feature>
<feature type="mutagenesis site" description="Strongly reduced serine ADP-ribosylation, caused by abolished interaction with HPF1." evidence="16">
    <original>H</original>
    <variation>A</variation>
    <location>
        <position position="394"/>
    </location>
</feature>
<feature type="mutagenesis site" description="Abolished trapping at DNA damage sites upon binding to PARP inhibitors (PARPi)." evidence="25">
    <original>H</original>
    <variation>A</variation>
    <location>
        <position position="428"/>
    </location>
</feature>
<feature type="mutagenesis site" description="Abolished poly [ADP-ribose] polymerase activity without affecting localization to DNA damage sites." evidence="9 14 19">
    <original>E</original>
    <variation>A</variation>
    <location>
        <position position="558"/>
    </location>
</feature>
<feature type="mutagenesis site" description="Strongly reduced serine ADP-ribosylation, caused by abolished interaction with HPF1." evidence="16">
    <original>LW</original>
    <variation>EE</variation>
    <location>
        <begin position="582"/>
        <end position="583"/>
    </location>
</feature>
<feature type="sequence conflict" description="In Ref. 2; AAD29857." evidence="32" ref="2">
    <original>P</original>
    <variation>H</variation>
    <location>
        <position position="447"/>
    </location>
</feature>
<feature type="sequence conflict" description="In Ref. 4; BAA92017." evidence="32" ref="4">
    <original>N</original>
    <variation>H</variation>
    <location>
        <position position="481"/>
    </location>
</feature>
<feature type="turn" evidence="52">
    <location>
        <begin position="99"/>
        <end position="104"/>
    </location>
</feature>
<feature type="strand" evidence="52">
    <location>
        <begin position="105"/>
        <end position="107"/>
    </location>
</feature>
<feature type="strand" evidence="52">
    <location>
        <begin position="116"/>
        <end position="123"/>
    </location>
</feature>
<feature type="turn" evidence="52">
    <location>
        <begin position="124"/>
        <end position="127"/>
    </location>
</feature>
<feature type="strand" evidence="52">
    <location>
        <begin position="128"/>
        <end position="143"/>
    </location>
</feature>
<feature type="strand" evidence="52">
    <location>
        <begin position="145"/>
        <end position="153"/>
    </location>
</feature>
<feature type="strand" evidence="52">
    <location>
        <begin position="159"/>
        <end position="166"/>
    </location>
</feature>
<feature type="helix" evidence="52">
    <location>
        <begin position="169"/>
        <end position="184"/>
    </location>
</feature>
<feature type="helix" evidence="52">
    <location>
        <begin position="188"/>
        <end position="193"/>
    </location>
</feature>
<feature type="strand" evidence="52">
    <location>
        <begin position="202"/>
        <end position="204"/>
    </location>
</feature>
<feature type="helix" evidence="51">
    <location>
        <begin position="236"/>
        <end position="245"/>
    </location>
</feature>
<feature type="helix" evidence="51">
    <location>
        <begin position="248"/>
        <end position="257"/>
    </location>
</feature>
<feature type="turn" evidence="51">
    <location>
        <begin position="262"/>
        <end position="264"/>
    </location>
</feature>
<feature type="helix" evidence="51">
    <location>
        <begin position="267"/>
        <end position="269"/>
    </location>
</feature>
<feature type="helix" evidence="51">
    <location>
        <begin position="272"/>
        <end position="290"/>
    </location>
</feature>
<feature type="helix" evidence="51">
    <location>
        <begin position="296"/>
        <end position="308"/>
    </location>
</feature>
<feature type="helix" evidence="51">
    <location>
        <begin position="324"/>
        <end position="346"/>
    </location>
</feature>
<feature type="helix" evidence="51">
    <location>
        <begin position="357"/>
        <end position="365"/>
    </location>
</feature>
<feature type="strand" evidence="51">
    <location>
        <begin position="367"/>
        <end position="371"/>
    </location>
</feature>
<feature type="helix" evidence="51">
    <location>
        <begin position="377"/>
        <end position="388"/>
    </location>
</feature>
<feature type="strand" evidence="51">
    <location>
        <begin position="397"/>
        <end position="409"/>
    </location>
</feature>
<feature type="helix" evidence="51">
    <location>
        <begin position="412"/>
        <end position="415"/>
    </location>
</feature>
<feature type="strand" evidence="51">
    <location>
        <begin position="423"/>
        <end position="429"/>
    </location>
</feature>
<feature type="helix" evidence="51">
    <location>
        <begin position="432"/>
        <end position="434"/>
    </location>
</feature>
<feature type="helix" evidence="51">
    <location>
        <begin position="435"/>
        <end position="441"/>
    </location>
</feature>
<feature type="helix" evidence="51">
    <location>
        <begin position="452"/>
        <end position="454"/>
    </location>
</feature>
<feature type="strand" evidence="51">
    <location>
        <begin position="459"/>
        <end position="466"/>
    </location>
</feature>
<feature type="helix" evidence="51">
    <location>
        <begin position="467"/>
        <end position="471"/>
    </location>
</feature>
<feature type="helix" evidence="51">
    <location>
        <begin position="472"/>
        <end position="474"/>
    </location>
</feature>
<feature type="strand" evidence="51">
    <location>
        <begin position="478"/>
        <end position="480"/>
    </location>
</feature>
<feature type="strand" evidence="51">
    <location>
        <begin position="482"/>
        <end position="491"/>
    </location>
</feature>
<feature type="strand" evidence="51">
    <location>
        <begin position="494"/>
        <end position="500"/>
    </location>
</feature>
<feature type="helix" evidence="51">
    <location>
        <begin position="505"/>
        <end position="508"/>
    </location>
</feature>
<feature type="strand" evidence="51">
    <location>
        <begin position="514"/>
        <end position="517"/>
    </location>
</feature>
<feature type="strand" evidence="51">
    <location>
        <begin position="519"/>
        <end position="523"/>
    </location>
</feature>
<feature type="helix" evidence="51">
    <location>
        <begin position="525"/>
        <end position="527"/>
    </location>
</feature>
<feature type="strand" evidence="51">
    <location>
        <begin position="529"/>
        <end position="531"/>
    </location>
</feature>
<feature type="strand" evidence="51">
    <location>
        <begin position="534"/>
        <end position="536"/>
    </location>
</feature>
<feature type="strand" evidence="51">
    <location>
        <begin position="541"/>
        <end position="543"/>
    </location>
</feature>
<feature type="strand" evidence="50">
    <location>
        <begin position="549"/>
        <end position="551"/>
    </location>
</feature>
<feature type="strand" evidence="51">
    <location>
        <begin position="554"/>
        <end position="556"/>
    </location>
</feature>
<feature type="strand" evidence="51">
    <location>
        <begin position="558"/>
        <end position="563"/>
    </location>
</feature>
<feature type="helix" evidence="51">
    <location>
        <begin position="564"/>
        <end position="566"/>
    </location>
</feature>
<feature type="strand" evidence="51">
    <location>
        <begin position="567"/>
        <end position="579"/>
    </location>
</feature>
<organism>
    <name type="scientific">Homo sapiens</name>
    <name type="common">Human</name>
    <dbReference type="NCBI Taxonomy" id="9606"/>
    <lineage>
        <taxon>Eukaryota</taxon>
        <taxon>Metazoa</taxon>
        <taxon>Chordata</taxon>
        <taxon>Craniata</taxon>
        <taxon>Vertebrata</taxon>
        <taxon>Euteleostomi</taxon>
        <taxon>Mammalia</taxon>
        <taxon>Eutheria</taxon>
        <taxon>Euarchontoglires</taxon>
        <taxon>Primates</taxon>
        <taxon>Haplorrhini</taxon>
        <taxon>Catarrhini</taxon>
        <taxon>Hominidae</taxon>
        <taxon>Homo</taxon>
    </lineage>
</organism>
<proteinExistence type="evidence at protein level"/>
<name>PARP2_HUMAN</name>
<protein>
    <recommendedName>
        <fullName evidence="32">Poly [ADP-ribose] polymerase 2</fullName>
        <shortName evidence="30">PARP-2</shortName>
        <shortName evidence="30">hPARP-2</shortName>
        <ecNumber evidence="8 14 15 17">2.4.2.30</ecNumber>
    </recommendedName>
    <alternativeName>
        <fullName evidence="31">ADP-ribosyltransferase diphtheria toxin-like 2</fullName>
        <shortName evidence="31">ARTD2</shortName>
    </alternativeName>
    <alternativeName>
        <fullName evidence="32">DNA ADP-ribosyltransferase PARP2</fullName>
        <ecNumber evidence="11">2.4.2.-</ecNumber>
    </alternativeName>
    <alternativeName>
        <fullName>NAD(+) ADP-ribosyltransferase 2</fullName>
        <shortName>ADPRT-2</shortName>
    </alternativeName>
    <alternativeName>
        <fullName evidence="27">Poly[ADP-ribose] synthase 2</fullName>
        <shortName evidence="27">pADPRT-2</shortName>
    </alternativeName>
    <alternativeName>
        <fullName evidence="32">Protein poly-ADP-ribosyltransferase PARP2</fullName>
        <ecNumber evidence="8 17">2.4.2.-</ecNumber>
    </alternativeName>
</protein>
<accession>Q9UGN5</accession>
<accession>Q8TEU4</accession>
<accession>Q9NUV2</accession>
<accession>Q9UMR4</accession>
<accession>Q9Y6C8</accession>
<evidence type="ECO:0000250" key="1">
    <source>
        <dbReference type="UniProtKB" id="O88554"/>
    </source>
</evidence>
<evidence type="ECO:0000255" key="2">
    <source>
        <dbReference type="PROSITE-ProRule" id="PRU00397"/>
    </source>
</evidence>
<evidence type="ECO:0000255" key="3">
    <source>
        <dbReference type="PROSITE-ProRule" id="PRU00398"/>
    </source>
</evidence>
<evidence type="ECO:0000255" key="4">
    <source>
        <dbReference type="PROSITE-ProRule" id="PRU01321"/>
    </source>
</evidence>
<evidence type="ECO:0000256" key="5">
    <source>
        <dbReference type="SAM" id="MobiDB-lite"/>
    </source>
</evidence>
<evidence type="ECO:0000269" key="6">
    <source>
    </source>
</evidence>
<evidence type="ECO:0000269" key="7">
    <source>
    </source>
</evidence>
<evidence type="ECO:0000269" key="8">
    <source>
    </source>
</evidence>
<evidence type="ECO:0000269" key="9">
    <source>
    </source>
</evidence>
<evidence type="ECO:0000269" key="10">
    <source>
    </source>
</evidence>
<evidence type="ECO:0000269" key="11">
    <source>
    </source>
</evidence>
<evidence type="ECO:0000269" key="12">
    <source>
    </source>
</evidence>
<evidence type="ECO:0000269" key="13">
    <source>
    </source>
</evidence>
<evidence type="ECO:0000269" key="14">
    <source>
    </source>
</evidence>
<evidence type="ECO:0000269" key="15">
    <source>
    </source>
</evidence>
<evidence type="ECO:0000269" key="16">
    <source>
    </source>
</evidence>
<evidence type="ECO:0000269" key="17">
    <source>
    </source>
</evidence>
<evidence type="ECO:0000269" key="18">
    <source>
    </source>
</evidence>
<evidence type="ECO:0000269" key="19">
    <source>
    </source>
</evidence>
<evidence type="ECO:0000269" key="20">
    <source>
    </source>
</evidence>
<evidence type="ECO:0000269" key="21">
    <source>
    </source>
</evidence>
<evidence type="ECO:0000269" key="22">
    <source>
    </source>
</evidence>
<evidence type="ECO:0000269" key="23">
    <source>
    </source>
</evidence>
<evidence type="ECO:0000269" key="24">
    <source>
    </source>
</evidence>
<evidence type="ECO:0000269" key="25">
    <source>
    </source>
</evidence>
<evidence type="ECO:0000269" key="26">
    <source ref="5"/>
</evidence>
<evidence type="ECO:0000303" key="27">
    <source>
    </source>
</evidence>
<evidence type="ECO:0000303" key="28">
    <source>
    </source>
</evidence>
<evidence type="ECO:0000303" key="29">
    <source>
    </source>
</evidence>
<evidence type="ECO:0000303" key="30">
    <source>
    </source>
</evidence>
<evidence type="ECO:0000303" key="31">
    <source>
    </source>
</evidence>
<evidence type="ECO:0000305" key="32"/>
<evidence type="ECO:0000305" key="33">
    <source>
    </source>
</evidence>
<evidence type="ECO:0000305" key="34">
    <source>
    </source>
</evidence>
<evidence type="ECO:0000305" key="35">
    <source>
    </source>
</evidence>
<evidence type="ECO:0000305" key="36">
    <source>
    </source>
</evidence>
<evidence type="ECO:0000312" key="37">
    <source>
        <dbReference type="HGNC" id="HGNC:272"/>
    </source>
</evidence>
<evidence type="ECO:0007744" key="38">
    <source>
        <dbReference type="PDB" id="5D5K"/>
    </source>
</evidence>
<evidence type="ECO:0007744" key="39">
    <source>
        <dbReference type="PDB" id="5DSY"/>
    </source>
</evidence>
<evidence type="ECO:0007744" key="40">
    <source>
        <dbReference type="PDB" id="6F1K"/>
    </source>
</evidence>
<evidence type="ECO:0007744" key="41">
    <source>
        <dbReference type="PDB" id="6F5B"/>
    </source>
</evidence>
<evidence type="ECO:0007744" key="42">
    <source>
        <dbReference type="PDB" id="6F5F"/>
    </source>
</evidence>
<evidence type="ECO:0007744" key="43">
    <source>
        <dbReference type="PDB" id="6TX3"/>
    </source>
</evidence>
<evidence type="ECO:0007744" key="44">
    <source>
        <dbReference type="PDB" id="6USJ"/>
    </source>
</evidence>
<evidence type="ECO:0007744" key="45">
    <source>
        <dbReference type="PDB" id="6X0L"/>
    </source>
</evidence>
<evidence type="ECO:0007744" key="46">
    <source>
        <dbReference type="PDB" id="6X0M"/>
    </source>
</evidence>
<evidence type="ECO:0007744" key="47">
    <source>
        <dbReference type="PDB" id="6X0N"/>
    </source>
</evidence>
<evidence type="ECO:0007744" key="48">
    <source>
        <dbReference type="PDB" id="7AEO"/>
    </source>
</evidence>
<evidence type="ECO:0007744" key="49">
    <source>
    </source>
</evidence>
<evidence type="ECO:0007829" key="50">
    <source>
        <dbReference type="PDB" id="3KJD"/>
    </source>
</evidence>
<evidence type="ECO:0007829" key="51">
    <source>
        <dbReference type="PDB" id="4ZZX"/>
    </source>
</evidence>
<evidence type="ECO:0007829" key="52">
    <source>
        <dbReference type="PDB" id="6F1K"/>
    </source>
</evidence>
<dbReference type="EC" id="2.4.2.30" evidence="8 14 15 17"/>
<dbReference type="EC" id="2.4.2.-" evidence="11 8 17"/>
<dbReference type="EMBL" id="AJ236912">
    <property type="protein sequence ID" value="CAB65088.1"/>
    <property type="molecule type" value="mRNA"/>
</dbReference>
<dbReference type="EMBL" id="AF085734">
    <property type="protein sequence ID" value="AAD29857.1"/>
    <property type="status" value="ALT_INIT"/>
    <property type="molecule type" value="mRNA"/>
</dbReference>
<dbReference type="EMBL" id="AJ236876">
    <property type="protein sequence ID" value="CAB41505.2"/>
    <property type="status" value="ALT_INIT"/>
    <property type="molecule type" value="mRNA"/>
</dbReference>
<dbReference type="EMBL" id="AK001980">
    <property type="protein sequence ID" value="BAA92017.1"/>
    <property type="status" value="ALT_TERM"/>
    <property type="molecule type" value="mRNA"/>
</dbReference>
<dbReference type="EMBL" id="AF479321">
    <property type="protein sequence ID" value="AAL77437.1"/>
    <property type="status" value="ALT_SEQ"/>
    <property type="molecule type" value="Genomic_DNA"/>
</dbReference>
<dbReference type="CCDS" id="CCDS41910.1">
    <molecule id="Q9UGN5-1"/>
</dbReference>
<dbReference type="CCDS" id="CCDS45077.1">
    <molecule id="Q9UGN5-2"/>
</dbReference>
<dbReference type="RefSeq" id="NP_001036083.1">
    <molecule id="Q9UGN5-2"/>
    <property type="nucleotide sequence ID" value="NM_001042618.2"/>
</dbReference>
<dbReference type="RefSeq" id="NP_005475.2">
    <molecule id="Q9UGN5-1"/>
    <property type="nucleotide sequence ID" value="NM_005484.4"/>
</dbReference>
<dbReference type="PDB" id="3KCZ">
    <property type="method" value="X-ray"/>
    <property type="resolution" value="2.00 A"/>
    <property type="chains" value="A/B=235-579"/>
</dbReference>
<dbReference type="PDB" id="3KJD">
    <property type="method" value="X-ray"/>
    <property type="resolution" value="1.95 A"/>
    <property type="chains" value="A/B=235-579"/>
</dbReference>
<dbReference type="PDB" id="4PJV">
    <property type="method" value="X-ray"/>
    <property type="resolution" value="2.50 A"/>
    <property type="chains" value="A/B=235-579"/>
</dbReference>
<dbReference type="PDB" id="4TVJ">
    <property type="method" value="X-ray"/>
    <property type="resolution" value="2.10 A"/>
    <property type="chains" value="A/B=235-579"/>
</dbReference>
<dbReference type="PDB" id="4ZZX">
    <property type="method" value="X-ray"/>
    <property type="resolution" value="1.65 A"/>
    <property type="chains" value="A/B=223-583"/>
</dbReference>
<dbReference type="PDB" id="4ZZY">
    <property type="method" value="X-ray"/>
    <property type="resolution" value="2.20 A"/>
    <property type="chains" value="A=223-583"/>
</dbReference>
<dbReference type="PDB" id="5D5K">
    <property type="method" value="X-ray"/>
    <property type="resolution" value="1.90 A"/>
    <property type="chains" value="B=1-91"/>
</dbReference>
<dbReference type="PDB" id="5DSY">
    <property type="method" value="X-ray"/>
    <property type="resolution" value="2.70 A"/>
    <property type="chains" value="A/B/C/D=348-583"/>
</dbReference>
<dbReference type="PDB" id="6F1K">
    <property type="method" value="X-ray"/>
    <property type="resolution" value="2.20 A"/>
    <property type="chains" value="A=90-218"/>
</dbReference>
<dbReference type="PDB" id="6F5B">
    <property type="method" value="X-ray"/>
    <property type="resolution" value="2.80 A"/>
    <property type="chains" value="A/B=90-218"/>
</dbReference>
<dbReference type="PDB" id="6F5F">
    <property type="method" value="X-ray"/>
    <property type="resolution" value="2.98 A"/>
    <property type="chains" value="A/B/C/D=90-218"/>
</dbReference>
<dbReference type="PDB" id="6TX3">
    <property type="method" value="X-ray"/>
    <property type="resolution" value="2.96 A"/>
    <property type="chains" value="B=323-583"/>
</dbReference>
<dbReference type="PDB" id="6USJ">
    <property type="method" value="EM"/>
    <property type="resolution" value="10.50 A"/>
    <property type="chains" value="U/V=1-583"/>
</dbReference>
<dbReference type="PDB" id="6X0L">
    <property type="method" value="EM"/>
    <property type="resolution" value="3.90 A"/>
    <property type="chains" value="P/R=1-583"/>
</dbReference>
<dbReference type="PDB" id="6X0M">
    <property type="method" value="EM"/>
    <property type="resolution" value="6.30 A"/>
    <property type="chains" value="P/p=1-583"/>
</dbReference>
<dbReference type="PDB" id="6X0N">
    <property type="method" value="EM"/>
    <property type="resolution" value="10.00 A"/>
    <property type="chains" value="P/R=1-583"/>
</dbReference>
<dbReference type="PDB" id="7AEO">
    <property type="method" value="X-ray"/>
    <property type="resolution" value="2.80 A"/>
    <property type="chains" value="A=90-583"/>
</dbReference>
<dbReference type="PDB" id="7R59">
    <property type="method" value="X-ray"/>
    <property type="resolution" value="2.00 A"/>
    <property type="chains" value="A=235-583"/>
</dbReference>
<dbReference type="PDB" id="8HE8">
    <property type="method" value="X-ray"/>
    <property type="resolution" value="3.05 A"/>
    <property type="chains" value="A/B/C=231-581"/>
</dbReference>
<dbReference type="PDB" id="8HKN">
    <property type="method" value="X-ray"/>
    <property type="resolution" value="2.50 A"/>
    <property type="chains" value="A/B=230-581"/>
</dbReference>
<dbReference type="PDB" id="8HKO">
    <property type="method" value="X-ray"/>
    <property type="resolution" value="2.10 A"/>
    <property type="chains" value="A/B=230-581"/>
</dbReference>
<dbReference type="PDB" id="8HKS">
    <property type="method" value="X-ray"/>
    <property type="resolution" value="2.80 A"/>
    <property type="chains" value="A/B/C/D=230-581"/>
</dbReference>
<dbReference type="PDB" id="8HLJ">
    <property type="method" value="X-ray"/>
    <property type="resolution" value="2.24 A"/>
    <property type="chains" value="A/B=230-581"/>
</dbReference>
<dbReference type="PDB" id="8HLQ">
    <property type="method" value="X-ray"/>
    <property type="resolution" value="2.70 A"/>
    <property type="chains" value="A/B=230-581"/>
</dbReference>
<dbReference type="PDB" id="8JNY">
    <property type="method" value="X-ray"/>
    <property type="resolution" value="3.20 A"/>
    <property type="chains" value="A/B=230-581"/>
</dbReference>
<dbReference type="PDBsum" id="3KCZ"/>
<dbReference type="PDBsum" id="3KJD"/>
<dbReference type="PDBsum" id="4PJV"/>
<dbReference type="PDBsum" id="4TVJ"/>
<dbReference type="PDBsum" id="4ZZX"/>
<dbReference type="PDBsum" id="4ZZY"/>
<dbReference type="PDBsum" id="5D5K"/>
<dbReference type="PDBsum" id="5DSY"/>
<dbReference type="PDBsum" id="6F1K"/>
<dbReference type="PDBsum" id="6F5B"/>
<dbReference type="PDBsum" id="6F5F"/>
<dbReference type="PDBsum" id="6TX3"/>
<dbReference type="PDBsum" id="6USJ"/>
<dbReference type="PDBsum" id="6X0L"/>
<dbReference type="PDBsum" id="6X0M"/>
<dbReference type="PDBsum" id="6X0N"/>
<dbReference type="PDBsum" id="7AEO"/>
<dbReference type="PDBsum" id="7R59"/>
<dbReference type="PDBsum" id="8HE8"/>
<dbReference type="PDBsum" id="8HKN"/>
<dbReference type="PDBsum" id="8HKO"/>
<dbReference type="PDBsum" id="8HKS"/>
<dbReference type="PDBsum" id="8HLJ"/>
<dbReference type="PDBsum" id="8HLQ"/>
<dbReference type="PDBsum" id="8JNY"/>
<dbReference type="EMDB" id="EMD-20864"/>
<dbReference type="EMDB" id="EMD-21978"/>
<dbReference type="EMDB" id="EMD-21979"/>
<dbReference type="EMDB" id="EMD-21980"/>
<dbReference type="SMR" id="Q9UGN5"/>
<dbReference type="BioGRID" id="115350">
    <property type="interactions" value="130"/>
</dbReference>
<dbReference type="CORUM" id="Q9UGN5"/>
<dbReference type="DIP" id="DIP-48934N"/>
<dbReference type="FunCoup" id="Q9UGN5">
    <property type="interactions" value="2840"/>
</dbReference>
<dbReference type="IntAct" id="Q9UGN5">
    <property type="interactions" value="121"/>
</dbReference>
<dbReference type="MINT" id="Q9UGN5"/>
<dbReference type="STRING" id="9606.ENSP00000250416"/>
<dbReference type="BindingDB" id="Q9UGN5"/>
<dbReference type="ChEMBL" id="CHEMBL5366"/>
<dbReference type="DrugBank" id="DB16063">
    <property type="generic name" value="2X-121"/>
</dbReference>
<dbReference type="DrugBank" id="DB11793">
    <property type="generic name" value="Niraparib"/>
</dbReference>
<dbReference type="DrugBank" id="DB09074">
    <property type="generic name" value="Olaparib"/>
</dbReference>
<dbReference type="DrugBank" id="DB12332">
    <property type="generic name" value="Rucaparib"/>
</dbReference>
<dbReference type="DrugBank" id="DB11760">
    <property type="generic name" value="Talazoparib"/>
</dbReference>
<dbReference type="DrugBank" id="DB07232">
    <property type="generic name" value="Veliparib"/>
</dbReference>
<dbReference type="DrugCentral" id="Q9UGN5"/>
<dbReference type="GuidetoPHARMACOLOGY" id="2772"/>
<dbReference type="GlyGen" id="Q9UGN5">
    <property type="glycosylation" value="3 sites, 2 N-linked glycans (2 sites), 1 O-linked glycan (1 site)"/>
</dbReference>
<dbReference type="iPTMnet" id="Q9UGN5"/>
<dbReference type="PhosphoSitePlus" id="Q9UGN5"/>
<dbReference type="BioMuta" id="PARP2"/>
<dbReference type="DMDM" id="17380230"/>
<dbReference type="jPOST" id="Q9UGN5"/>
<dbReference type="MassIVE" id="Q9UGN5"/>
<dbReference type="PaxDb" id="9606-ENSP00000250416"/>
<dbReference type="PeptideAtlas" id="Q9UGN5"/>
<dbReference type="ProteomicsDB" id="84250">
    <molecule id="Q9UGN5-1"/>
</dbReference>
<dbReference type="ProteomicsDB" id="84251">
    <molecule id="Q9UGN5-2"/>
</dbReference>
<dbReference type="Pumba" id="Q9UGN5"/>
<dbReference type="Antibodypedia" id="4794">
    <property type="antibodies" value="309 antibodies from 37 providers"/>
</dbReference>
<dbReference type="DNASU" id="10038"/>
<dbReference type="Ensembl" id="ENST00000250416.9">
    <molecule id="Q9UGN5-1"/>
    <property type="protein sequence ID" value="ENSP00000250416.5"/>
    <property type="gene ID" value="ENSG00000129484.14"/>
</dbReference>
<dbReference type="Ensembl" id="ENST00000429687.8">
    <molecule id="Q9UGN5-2"/>
    <property type="protein sequence ID" value="ENSP00000392972.3"/>
    <property type="gene ID" value="ENSG00000129484.14"/>
</dbReference>
<dbReference type="Ensembl" id="ENST00000708822.1">
    <molecule id="Q9UGN5-2"/>
    <property type="protein sequence ID" value="ENSP00000517361.1"/>
    <property type="gene ID" value="ENSG00000291803.1"/>
</dbReference>
<dbReference type="Ensembl" id="ENST00000708823.1">
    <molecule id="Q9UGN5-1"/>
    <property type="protein sequence ID" value="ENSP00000517362.1"/>
    <property type="gene ID" value="ENSG00000291803.1"/>
</dbReference>
<dbReference type="GeneID" id="10038"/>
<dbReference type="KEGG" id="hsa:10038"/>
<dbReference type="MANE-Select" id="ENST00000429687.8">
    <molecule id="Q9UGN5-2"/>
    <property type="protein sequence ID" value="ENSP00000392972.3"/>
    <property type="RefSeq nucleotide sequence ID" value="NM_001042618.2"/>
    <property type="RefSeq protein sequence ID" value="NP_001036083.1"/>
</dbReference>
<dbReference type="UCSC" id="uc001vxc.4">
    <molecule id="Q9UGN5-1"/>
    <property type="organism name" value="human"/>
</dbReference>
<dbReference type="AGR" id="HGNC:272"/>
<dbReference type="CTD" id="10038"/>
<dbReference type="DisGeNET" id="10038"/>
<dbReference type="GeneCards" id="PARP2"/>
<dbReference type="HGNC" id="HGNC:272">
    <property type="gene designation" value="PARP2"/>
</dbReference>
<dbReference type="HPA" id="ENSG00000129484">
    <property type="expression patterns" value="Low tissue specificity"/>
</dbReference>
<dbReference type="MIM" id="607725">
    <property type="type" value="gene"/>
</dbReference>
<dbReference type="neXtProt" id="NX_Q9UGN5"/>
<dbReference type="OpenTargets" id="ENSG00000129484"/>
<dbReference type="PharmGKB" id="PA24592"/>
<dbReference type="VEuPathDB" id="HostDB:ENSG00000129484"/>
<dbReference type="eggNOG" id="KOG1037">
    <property type="taxonomic scope" value="Eukaryota"/>
</dbReference>
<dbReference type="GeneTree" id="ENSGT00940000158452"/>
<dbReference type="HOGENOM" id="CLU_004841_2_2_1"/>
<dbReference type="InParanoid" id="Q9UGN5"/>
<dbReference type="OMA" id="QGENDRF"/>
<dbReference type="OrthoDB" id="429950at2759"/>
<dbReference type="PAN-GO" id="Q9UGN5">
    <property type="GO annotations" value="5 GO annotations based on evolutionary models"/>
</dbReference>
<dbReference type="PhylomeDB" id="Q9UGN5"/>
<dbReference type="TreeFam" id="TF315407"/>
<dbReference type="BRENDA" id="2.4.2.30">
    <property type="organism ID" value="2681"/>
</dbReference>
<dbReference type="PathwayCommons" id="Q9UGN5"/>
<dbReference type="Reactome" id="R-HSA-110362">
    <property type="pathway name" value="POLB-Dependent Long Patch Base Excision Repair"/>
</dbReference>
<dbReference type="Reactome" id="R-HSA-5685939">
    <property type="pathway name" value="HDR through MMEJ (alt-NHEJ)"/>
</dbReference>
<dbReference type="Reactome" id="R-HSA-5696394">
    <property type="pathway name" value="DNA Damage Recognition in GG-NER"/>
</dbReference>
<dbReference type="Reactome" id="R-HSA-5696395">
    <property type="pathway name" value="Formation of Incision Complex in GG-NER"/>
</dbReference>
<dbReference type="Reactome" id="R-HSA-5696400">
    <property type="pathway name" value="Dual Incision in GG-NER"/>
</dbReference>
<dbReference type="SignaLink" id="Q9UGN5"/>
<dbReference type="SIGNOR" id="Q9UGN5"/>
<dbReference type="BioGRID-ORCS" id="10038">
    <property type="hits" value="13 hits in 1169 CRISPR screens"/>
</dbReference>
<dbReference type="CD-CODE" id="D1F4711B">
    <property type="entry name" value="PARP1-DNA condensate"/>
</dbReference>
<dbReference type="ChiTaRS" id="PARP2">
    <property type="organism name" value="human"/>
</dbReference>
<dbReference type="EvolutionaryTrace" id="Q9UGN5"/>
<dbReference type="GeneWiki" id="PARP2"/>
<dbReference type="GenomeRNAi" id="10038"/>
<dbReference type="Pharos" id="Q9UGN5">
    <property type="development level" value="Tclin"/>
</dbReference>
<dbReference type="PRO" id="PR:Q9UGN5"/>
<dbReference type="Proteomes" id="UP000005640">
    <property type="component" value="Chromosome 14"/>
</dbReference>
<dbReference type="RNAct" id="Q9UGN5">
    <property type="molecule type" value="protein"/>
</dbReference>
<dbReference type="Bgee" id="ENSG00000129484">
    <property type="expression patterns" value="Expressed in cerebellar hemisphere and 202 other cell types or tissues"/>
</dbReference>
<dbReference type="ExpressionAtlas" id="Q9UGN5">
    <property type="expression patterns" value="baseline and differential"/>
</dbReference>
<dbReference type="GO" id="GO:0005829">
    <property type="term" value="C:cytosol"/>
    <property type="evidence" value="ECO:0000314"/>
    <property type="project" value="HPA"/>
</dbReference>
<dbReference type="GO" id="GO:0005730">
    <property type="term" value="C:nucleolus"/>
    <property type="evidence" value="ECO:0000314"/>
    <property type="project" value="HPA"/>
</dbReference>
<dbReference type="GO" id="GO:0005654">
    <property type="term" value="C:nucleoplasm"/>
    <property type="evidence" value="ECO:0000314"/>
    <property type="project" value="HPA"/>
</dbReference>
<dbReference type="GO" id="GO:0005634">
    <property type="term" value="C:nucleus"/>
    <property type="evidence" value="ECO:0000314"/>
    <property type="project" value="UniProtKB"/>
</dbReference>
<dbReference type="GO" id="GO:0090734">
    <property type="term" value="C:site of DNA damage"/>
    <property type="evidence" value="ECO:0000314"/>
    <property type="project" value="UniProtKB"/>
</dbReference>
<dbReference type="GO" id="GO:0003682">
    <property type="term" value="F:chromatin binding"/>
    <property type="evidence" value="ECO:0000314"/>
    <property type="project" value="UniProtKB"/>
</dbReference>
<dbReference type="GO" id="GO:0003684">
    <property type="term" value="F:damaged DNA binding"/>
    <property type="evidence" value="ECO:0000314"/>
    <property type="project" value="UniProtKB"/>
</dbReference>
<dbReference type="GO" id="GO:0140294">
    <property type="term" value="F:NAD DNA ADP-ribosyltransferase activity"/>
    <property type="evidence" value="ECO:0000314"/>
    <property type="project" value="UniProtKB"/>
</dbReference>
<dbReference type="GO" id="GO:0003950">
    <property type="term" value="F:NAD+ poly-ADP-ribosyltransferase activity"/>
    <property type="evidence" value="ECO:0000314"/>
    <property type="project" value="UniProtKB"/>
</dbReference>
<dbReference type="GO" id="GO:1990404">
    <property type="term" value="F:NAD+-protein mono-ADP-ribosyltransferase activity"/>
    <property type="evidence" value="ECO:0000314"/>
    <property type="project" value="UniProtKB"/>
</dbReference>
<dbReference type="GO" id="GO:0140806">
    <property type="term" value="F:NAD+-protein-aspartate ADP-ribosyltransferase activity"/>
    <property type="evidence" value="ECO:0000314"/>
    <property type="project" value="UniProtKB"/>
</dbReference>
<dbReference type="GO" id="GO:0140807">
    <property type="term" value="F:NAD+-protein-glutamate ADP-ribosyltransferase activity"/>
    <property type="evidence" value="ECO:0000314"/>
    <property type="project" value="UniProtKB"/>
</dbReference>
<dbReference type="GO" id="GO:0140805">
    <property type="term" value="F:NAD+-protein-serine ADP-ribosyltransferase activity"/>
    <property type="evidence" value="ECO:0000314"/>
    <property type="project" value="UniProtKB"/>
</dbReference>
<dbReference type="GO" id="GO:0031491">
    <property type="term" value="F:nucleosome binding"/>
    <property type="evidence" value="ECO:0000314"/>
    <property type="project" value="UniProtKB"/>
</dbReference>
<dbReference type="GO" id="GO:0016779">
    <property type="term" value="F:nucleotidyltransferase activity"/>
    <property type="evidence" value="ECO:0007669"/>
    <property type="project" value="UniProtKB-KW"/>
</dbReference>
<dbReference type="GO" id="GO:0072572">
    <property type="term" value="F:poly-ADP-D-ribose binding"/>
    <property type="evidence" value="ECO:0000314"/>
    <property type="project" value="UniProtKB"/>
</dbReference>
<dbReference type="GO" id="GO:0160004">
    <property type="term" value="F:poly-ADP-D-ribose modification-dependent protein binding"/>
    <property type="evidence" value="ECO:0000314"/>
    <property type="project" value="UniProt"/>
</dbReference>
<dbReference type="GO" id="GO:0006284">
    <property type="term" value="P:base-excision repair"/>
    <property type="evidence" value="ECO:0007669"/>
    <property type="project" value="Ensembl"/>
</dbReference>
<dbReference type="GO" id="GO:0046697">
    <property type="term" value="P:decidualization"/>
    <property type="evidence" value="ECO:0000250"/>
    <property type="project" value="UniProtKB"/>
</dbReference>
<dbReference type="GO" id="GO:0030592">
    <property type="term" value="P:DNA ADP-ribosylation"/>
    <property type="evidence" value="ECO:0000314"/>
    <property type="project" value="UniProtKB"/>
</dbReference>
<dbReference type="GO" id="GO:0006974">
    <property type="term" value="P:DNA damage response"/>
    <property type="evidence" value="ECO:0000314"/>
    <property type="project" value="UniProt"/>
</dbReference>
<dbReference type="GO" id="GO:0006281">
    <property type="term" value="P:DNA repair"/>
    <property type="evidence" value="ECO:0000314"/>
    <property type="project" value="UniProt"/>
</dbReference>
<dbReference type="GO" id="GO:0140861">
    <property type="term" value="P:DNA repair-dependent chromatin remodeling"/>
    <property type="evidence" value="ECO:0000314"/>
    <property type="project" value="UniProtKB"/>
</dbReference>
<dbReference type="GO" id="GO:0006302">
    <property type="term" value="P:double-strand break repair"/>
    <property type="evidence" value="ECO:0000318"/>
    <property type="project" value="GO_Central"/>
</dbReference>
<dbReference type="GO" id="GO:0097191">
    <property type="term" value="P:extrinsic apoptotic signaling pathway"/>
    <property type="evidence" value="ECO:0007669"/>
    <property type="project" value="Ensembl"/>
</dbReference>
<dbReference type="GO" id="GO:0110088">
    <property type="term" value="P:hippocampal neuron apoptotic process"/>
    <property type="evidence" value="ECO:0007669"/>
    <property type="project" value="Ensembl"/>
</dbReference>
<dbReference type="GO" id="GO:0061051">
    <property type="term" value="P:positive regulation of cell growth involved in cardiac muscle cell development"/>
    <property type="evidence" value="ECO:0007669"/>
    <property type="project" value="Ensembl"/>
</dbReference>
<dbReference type="GO" id="GO:0070213">
    <property type="term" value="P:protein auto-ADP-ribosylation"/>
    <property type="evidence" value="ECO:0000314"/>
    <property type="project" value="UniProtKB"/>
</dbReference>
<dbReference type="GO" id="GO:0070212">
    <property type="term" value="P:protein poly-ADP-ribosylation"/>
    <property type="evidence" value="ECO:0000314"/>
    <property type="project" value="UniProtKB"/>
</dbReference>
<dbReference type="GO" id="GO:0090649">
    <property type="term" value="P:response to oxygen-glucose deprivation"/>
    <property type="evidence" value="ECO:0007669"/>
    <property type="project" value="Ensembl"/>
</dbReference>
<dbReference type="CDD" id="cd22252">
    <property type="entry name" value="PARP2_NTR"/>
    <property type="match status" value="1"/>
</dbReference>
<dbReference type="CDD" id="cd01437">
    <property type="entry name" value="parp_like"/>
    <property type="match status" value="1"/>
</dbReference>
<dbReference type="CDD" id="cd08003">
    <property type="entry name" value="WGR_PARP2_like"/>
    <property type="match status" value="1"/>
</dbReference>
<dbReference type="FunFam" id="1.20.142.10:FF:000003">
    <property type="entry name" value="Poly [ADP-ribose] polymerase"/>
    <property type="match status" value="1"/>
</dbReference>
<dbReference type="FunFam" id="2.20.140.10:FF:000001">
    <property type="entry name" value="Poly [ADP-ribose] polymerase"/>
    <property type="match status" value="1"/>
</dbReference>
<dbReference type="FunFam" id="3.90.228.10:FF:000002">
    <property type="entry name" value="Poly [ADP-ribose] polymerase"/>
    <property type="match status" value="1"/>
</dbReference>
<dbReference type="Gene3D" id="3.90.228.10">
    <property type="match status" value="1"/>
</dbReference>
<dbReference type="Gene3D" id="1.20.142.10">
    <property type="entry name" value="Poly(ADP-ribose) polymerase, regulatory domain"/>
    <property type="match status" value="1"/>
</dbReference>
<dbReference type="Gene3D" id="2.20.140.10">
    <property type="entry name" value="WGR domain"/>
    <property type="match status" value="1"/>
</dbReference>
<dbReference type="InterPro" id="IPR050800">
    <property type="entry name" value="ARTD/PARP"/>
</dbReference>
<dbReference type="InterPro" id="IPR012317">
    <property type="entry name" value="Poly(ADP-ribose)pol_cat_dom"/>
</dbReference>
<dbReference type="InterPro" id="IPR004102">
    <property type="entry name" value="Poly(ADP-ribose)pol_reg_dom"/>
</dbReference>
<dbReference type="InterPro" id="IPR036616">
    <property type="entry name" value="Poly(ADP-ribose)pol_reg_dom_sf"/>
</dbReference>
<dbReference type="InterPro" id="IPR036930">
    <property type="entry name" value="WGR_dom_sf"/>
</dbReference>
<dbReference type="InterPro" id="IPR008893">
    <property type="entry name" value="WGR_domain"/>
</dbReference>
<dbReference type="PANTHER" id="PTHR10459">
    <property type="entry name" value="DNA LIGASE"/>
    <property type="match status" value="1"/>
</dbReference>
<dbReference type="PANTHER" id="PTHR10459:SF60">
    <property type="entry name" value="POLY [ADP-RIBOSE] POLYMERASE 2"/>
    <property type="match status" value="1"/>
</dbReference>
<dbReference type="Pfam" id="PF00644">
    <property type="entry name" value="PARP"/>
    <property type="match status" value="1"/>
</dbReference>
<dbReference type="Pfam" id="PF02877">
    <property type="entry name" value="PARP_reg"/>
    <property type="match status" value="1"/>
</dbReference>
<dbReference type="Pfam" id="PF05406">
    <property type="entry name" value="WGR"/>
    <property type="match status" value="1"/>
</dbReference>
<dbReference type="SMART" id="SM00773">
    <property type="entry name" value="WGR"/>
    <property type="match status" value="1"/>
</dbReference>
<dbReference type="SUPFAM" id="SSF56399">
    <property type="entry name" value="ADP-ribosylation"/>
    <property type="match status" value="1"/>
</dbReference>
<dbReference type="SUPFAM" id="SSF47587">
    <property type="entry name" value="Domain of poly(ADP-ribose) polymerase"/>
    <property type="match status" value="1"/>
</dbReference>
<dbReference type="SUPFAM" id="SSF142921">
    <property type="entry name" value="WGR domain-like"/>
    <property type="match status" value="1"/>
</dbReference>
<dbReference type="PROSITE" id="PS51060">
    <property type="entry name" value="PARP_ALPHA_HD"/>
    <property type="match status" value="1"/>
</dbReference>
<dbReference type="PROSITE" id="PS51059">
    <property type="entry name" value="PARP_CATALYTIC"/>
    <property type="match status" value="1"/>
</dbReference>
<dbReference type="PROSITE" id="PS51977">
    <property type="entry name" value="WGR"/>
    <property type="match status" value="1"/>
</dbReference>
<comment type="function">
    <text evidence="6 8 11 12 13 14 15 16 17 20 21 22 23 24">Poly-ADP-ribosyltransferase that mediates poly-ADP-ribosylation of proteins and plays a key role in DNA repair (PubMed:10364231, PubMed:25043379, PubMed:27471034, PubMed:30104678, PubMed:32028527, PubMed:32939087, PubMed:34108479, PubMed:34486521, PubMed:34874266). Mediates glutamate, aspartate or serine ADP-ribosylation of proteins: the ADP-D-ribosyl group of NAD(+) is transferred to the acceptor carboxyl group of target residues and further ADP-ribosyl groups are transferred to the 2'-position of the terminal adenosine moiety, building up a polymer with an average chain length of 20-30 units (PubMed:25043379, PubMed:30104678, PubMed:30321391). Serine ADP-ribosylation of proteins constitutes the primary form of ADP-ribosylation of proteins in response to DNA damage (PubMed:32939087). Mediates glutamate and aspartate ADP-ribosylation of target proteins in absence of HPF1 (PubMed:25043379). Following interaction with HPF1, catalyzes serine ADP-ribosylation of target proteins; HPF1 conferring serine specificity by completing the PARP2 active site (PubMed:28190768, PubMed:32028527, PubMed:34108479, PubMed:34486521, PubMed:34874266). PARP2 initiates the repair of double-strand DNA breaks: recognizes and binds DNA breaks within chromatin and recruits HPF1, licensing serine ADP-ribosylation of target proteins, such as histones, thereby promoting decompaction of chromatin and the recruitment of repair factors leading to the reparation of DNA strand breaks (PubMed:10364231, PubMed:32939087, PubMed:34108479). HPF1 initiates serine ADP-ribosylation but restricts the polymerase activity of PARP2 in order to limit the length of poly-ADP-ribose chains (PubMed:34732825, PubMed:34795260). Specifically mediates formation of branched poly-ADP-ribosylation (PubMed:30104678). Branched poly-ADP-ribose chains are specifically recognized by some factors, such as APLF (PubMed:30104678). In addition to proteins, also able to ADP-ribosylate DNA: preferentially acts on 5'-terminal phosphates at DNA strand breaks termini in nicked duplex (PubMed:27471034, PubMed:29361132).</text>
</comment>
<comment type="catalytic activity">
    <reaction evidence="8 14 15 17">
        <text>NAD(+) + (ADP-D-ribosyl)n-acceptor = nicotinamide + (ADP-D-ribosyl)n+1-acceptor + H(+).</text>
        <dbReference type="EC" id="2.4.2.30"/>
    </reaction>
</comment>
<comment type="catalytic activity">
    <reaction evidence="16 17 20 34">
        <text>L-seryl-[protein] + NAD(+) = O-(ADP-D-ribosyl)-L-seryl-[protein] + nicotinamide + H(+)</text>
        <dbReference type="Rhea" id="RHEA:58232"/>
        <dbReference type="Rhea" id="RHEA-COMP:9863"/>
        <dbReference type="Rhea" id="RHEA-COMP:15091"/>
        <dbReference type="ChEBI" id="CHEBI:15378"/>
        <dbReference type="ChEBI" id="CHEBI:17154"/>
        <dbReference type="ChEBI" id="CHEBI:29999"/>
        <dbReference type="ChEBI" id="CHEBI:57540"/>
        <dbReference type="ChEBI" id="CHEBI:142556"/>
    </reaction>
    <physiologicalReaction direction="left-to-right" evidence="16 17 20 34">
        <dbReference type="Rhea" id="RHEA:58233"/>
    </physiologicalReaction>
</comment>
<comment type="catalytic activity">
    <reaction evidence="8">
        <text>L-aspartyl-[protein] + NAD(+) = 4-O-(ADP-D-ribosyl)-L-aspartyl-[protein] + nicotinamide</text>
        <dbReference type="Rhea" id="RHEA:54424"/>
        <dbReference type="Rhea" id="RHEA-COMP:9867"/>
        <dbReference type="Rhea" id="RHEA-COMP:13832"/>
        <dbReference type="ChEBI" id="CHEBI:17154"/>
        <dbReference type="ChEBI" id="CHEBI:29961"/>
        <dbReference type="ChEBI" id="CHEBI:57540"/>
        <dbReference type="ChEBI" id="CHEBI:138102"/>
    </reaction>
    <physiologicalReaction direction="left-to-right" evidence="8">
        <dbReference type="Rhea" id="RHEA:54425"/>
    </physiologicalReaction>
</comment>
<comment type="catalytic activity">
    <reaction evidence="8">
        <text>L-glutamyl-[protein] + NAD(+) = 5-O-(ADP-D-ribosyl)-L-glutamyl-[protein] + nicotinamide</text>
        <dbReference type="Rhea" id="RHEA:58224"/>
        <dbReference type="Rhea" id="RHEA-COMP:10208"/>
        <dbReference type="Rhea" id="RHEA-COMP:15089"/>
        <dbReference type="ChEBI" id="CHEBI:17154"/>
        <dbReference type="ChEBI" id="CHEBI:29973"/>
        <dbReference type="ChEBI" id="CHEBI:57540"/>
        <dbReference type="ChEBI" id="CHEBI:142540"/>
    </reaction>
    <physiologicalReaction direction="left-to-right" evidence="8">
        <dbReference type="Rhea" id="RHEA:58225"/>
    </physiologicalReaction>
</comment>
<comment type="activity regulation">
    <text evidence="19 20 25">ADP-ribosyltransferase activity is regulated via an allosteric activation mechanism (PubMed:34108479). In absence of activation signal, PARP2 is autoinhibited by the PARP alpha-helical domain (also named HD region), which prevents effective NAD(+)-binding (PubMed:34108479). Activity is highly stimulated by signals, which unfold the PARP alpha-helical domain, relieving autoinhibition (PubMed:34108479). Poly-ADP-ribosyltransferase activity is tightly regulated and PARP2 is removed from damaged chromatin following initial poly-ADP-ribosylation of chromatin to avoid prolonged residence (trapping) that has cytotoxic consequences (PubMed:33275888). CHD1L promotes PARP2 removal from chromatin (PubMed:33275888). ADP-ribosyltransferase activity is inhibited by a number of PARP inhibitors (PARPi) compounds, that are used the treatment of breast or ovarian cancers that have defects in DNA repair by homologous recombination (PubMed:35349716). PARPi molecules (niraparib, talazoparib, and, to a lesser extent, olaparib) also trap PARP2 at DNA damage sites (PubMed:33275888, PubMed:35349716).</text>
</comment>
<comment type="subunit">
    <text evidence="1 7 10 12 16 17 18 20">Component of a base excision repair (BER) complex, containing at least XRCC1, PARP1, POLB and LRIG3 (By similarity). Homo- and heterodimer with PARP1 (PubMed:20092359). Interacts (via the PARP catalytic domain) with HPF1 (PubMed:27067600, PubMed:28190768, PubMed:32028527, PubMed:32939087, PubMed:33141820, PubMed:34108479). Interacts with core nucleosomes (PubMed:32939087, PubMed:33141820).</text>
</comment>
<comment type="interaction">
    <interactant intactId="EBI-2795348">
        <id>Q9UGN5</id>
    </interactant>
    <interactant intactId="EBI-1256044">
        <id>Q8IW19</id>
        <label>APLF</label>
    </interactant>
    <organismsDiffer>false</organismsDiffer>
    <experiments>2</experiments>
</comment>
<comment type="interaction">
    <interactant intactId="EBI-2795348">
        <id>Q9UGN5</id>
    </interactant>
    <interactant intactId="EBI-1044081">
        <id>Q00688</id>
        <label>FKBP3</label>
    </interactant>
    <organismsDiffer>false</organismsDiffer>
    <experiments>2</experiments>
</comment>
<comment type="interaction">
    <interactant intactId="EBI-2795348">
        <id>Q9UGN5</id>
    </interactant>
    <interactant intactId="EBI-1758689">
        <id>P05204</id>
        <label>HMGN2</label>
    </interactant>
    <organismsDiffer>false</organismsDiffer>
    <experiments>2</experiments>
</comment>
<comment type="interaction">
    <interactant intactId="EBI-2795348">
        <id>Q9UGN5</id>
    </interactant>
    <interactant intactId="EBI-2652799">
        <id>Q99469</id>
        <label>STAC</label>
    </interactant>
    <organismsDiffer>false</organismsDiffer>
    <experiments>2</experiments>
</comment>
<comment type="subcellular location">
    <subcellularLocation>
        <location evidence="6 9">Nucleus</location>
    </subcellularLocation>
    <subcellularLocation>
        <location evidence="9 14 15 17 18 25">Chromosome</location>
    </subcellularLocation>
    <text evidence="9 14 15 17 18 25">Recruited to DNA damage sites in a PARP1-dependent process: recognizes and binds poly-ADP-ribose chains produced by PARP1 at DNA damage sites via its N-terminus, leading to its recruitment.</text>
</comment>
<comment type="alternative products">
    <event type="alternative splicing"/>
    <isoform>
        <id>Q9UGN5-1</id>
        <name>1</name>
        <sequence type="displayed"/>
    </isoform>
    <isoform>
        <id>Q9UGN5-2</id>
        <name>2</name>
        <sequence type="described" ref="VSP_004537"/>
    </isoform>
</comment>
<comment type="tissue specificity">
    <text evidence="6">Widely expressed, mainly in actively dividing tissues (PubMed:10364231). The highest levels are in the brain, heart, pancreas, skeletal muscle and testis; also detected in kidney, liver, lung, placenta, ovary and spleen; levels are low in leukocytes, colon, small intestine, prostate and thymus (PubMed:10364231).</text>
</comment>
<comment type="domain">
    <text evidence="14">The N-terminal region (NTR) recognizes and binds poly-ADP-ribose chains produced by PARP1, leading to its recruitment to DNA damage sites.</text>
</comment>
<comment type="domain">
    <text evidence="9">The N-terminal disordered region does not act as a key DNA-binding domain (PubMed:26704974). The WGR and PARP catalytic domains function together to recruit PARP2 to sites of DNA breaks. The N-terminal disordered region is only required for activation on specific types of DNA damage (PubMed:26704974).</text>
</comment>
<comment type="domain">
    <text evidence="15 17 18">The WGR domain bridges two nucleosomes, with the broken DNA aligned in a position suitable for ligation (PubMed:30321391, PubMed:32939087, PubMed:33141820). The bridging induces structural changes in PARP2 that signal the recognition of a DNA break to the catalytic domain of PARP2, promoting HPF1 recruitment and subsequent activation of PARP2, licensing serine ADP-ribosylation of target proteins (PubMed:32939087).</text>
</comment>
<comment type="domain">
    <text evidence="20">The PARP alpha-helical domain (also named HD region) prevents effective NAD(+)-binding in absence of activation signal (PubMed:34108479). Binding to damaged DNA unfolds the PARP alpha-helical domain, relieving autoinhibition (PubMed:34108479).</text>
</comment>
<comment type="PTM">
    <text evidence="1 17 20">Auto poly-ADP-ribosylated on serine residues, leading to dissociation of the PARP2-HPF1 complex from chromatin (PubMed:32939087, PubMed:34108479). Poly-ADP-ribosylated by PARP1 (By similarity).</text>
</comment>
<comment type="PTM">
    <text evidence="1">Acetylation reduces DNA binding and enzymatic activity.</text>
</comment>
<comment type="PTM">
    <text evidence="1">Proteolytically cleaved by caspase-8 (CASP8) in response to apoptosis, leading to its inactivation.</text>
</comment>
<comment type="similarity">
    <text evidence="32">Belongs to the ARTD/PARP family.</text>
</comment>
<comment type="sequence caution" evidence="32">
    <conflict type="erroneous initiation">
        <sequence resource="EMBL-CDS" id="AAD29857"/>
    </conflict>
</comment>
<comment type="sequence caution" evidence="32">
    <conflict type="erroneous gene model prediction">
        <sequence resource="EMBL-CDS" id="AAL77437"/>
    </conflict>
</comment>
<comment type="sequence caution" evidence="32">
    <conflict type="erroneous initiation">
        <sequence resource="EMBL-CDS" id="CAB41505"/>
    </conflict>
</comment>
<comment type="online information" name="Protein Spotlight">
    <link uri="https://www.proteinspotlight.org/back_issues/235/"/>
    <text>Catalysis - Issue 235 of April 2021</text>
</comment>
<gene>
    <name evidence="29 37" type="primary">PARP2</name>
    <name type="synonym">ADPRT2</name>
    <name type="synonym">ADPRTL2</name>
</gene>
<reference key="1">
    <citation type="journal article" date="1999" name="J. Biol. Chem.">
        <title>PARP-2, a novel mammalian DNA damage-dependent poly(ADP-ribose) polymerase.</title>
        <authorList>
            <person name="Ame J.-C."/>
            <person name="Rolli V."/>
            <person name="Schreiber V."/>
            <person name="Niedergang C."/>
            <person name="Apiou F."/>
            <person name="Decker P."/>
            <person name="Muller S."/>
            <person name="Hoeger T."/>
            <person name="Menissier-de Murcia J."/>
            <person name="de Murcia G.M."/>
        </authorList>
    </citation>
    <scope>NUCLEOTIDE SEQUENCE [MRNA] (ISOFORM 2)</scope>
    <scope>FUNCTION</scope>
    <scope>SUBCELLULAR LOCATION</scope>
    <scope>TISSUE SPECIFICITY</scope>
    <source>
        <tissue>Fetal brain</tissue>
    </source>
</reference>
<reference key="2">
    <citation type="journal article" date="1999" name="Genomics">
        <title>A human poly(ADP-ribose) polymerase gene family (ADPRTL): cDNA cloning of two novel poly(ADP-ribose) polymerase homologues.</title>
        <authorList>
            <person name="Johansson M."/>
        </authorList>
    </citation>
    <scope>NUCLEOTIDE SEQUENCE [MRNA] OF 2-583 (ISOFORM 1)</scope>
    <source>
        <tissue>Fetal brain</tissue>
    </source>
</reference>
<reference key="3">
    <citation type="journal article" date="1999" name="FEBS Lett.">
        <title>pADPRT-2: a novel mammalian polymerizing(ADP-ribosyl)transferase gene related to truncated pADPRT homologues in plants and Caenorhabditis elegans.</title>
        <authorList>
            <person name="Berghammer H."/>
            <person name="Ebner M."/>
            <person name="Marksteiner R."/>
            <person name="Auer B."/>
        </authorList>
    </citation>
    <scope>NUCLEOTIDE SEQUENCE [MRNA] OF 22-583 (ISOFORM 1)</scope>
    <source>
        <tissue>Fibroblast</tissue>
    </source>
</reference>
<reference key="4">
    <citation type="journal article" date="2004" name="Nat. Genet.">
        <title>Complete sequencing and characterization of 21,243 full-length human cDNAs.</title>
        <authorList>
            <person name="Ota T."/>
            <person name="Suzuki Y."/>
            <person name="Nishikawa T."/>
            <person name="Otsuki T."/>
            <person name="Sugiyama T."/>
            <person name="Irie R."/>
            <person name="Wakamatsu A."/>
            <person name="Hayashi K."/>
            <person name="Sato H."/>
            <person name="Nagai K."/>
            <person name="Kimura K."/>
            <person name="Makita H."/>
            <person name="Sekine M."/>
            <person name="Obayashi M."/>
            <person name="Nishi T."/>
            <person name="Shibahara T."/>
            <person name="Tanaka T."/>
            <person name="Ishii S."/>
            <person name="Yamamoto J."/>
            <person name="Saito K."/>
            <person name="Kawai Y."/>
            <person name="Isono Y."/>
            <person name="Nakamura Y."/>
            <person name="Nagahari K."/>
            <person name="Murakami K."/>
            <person name="Yasuda T."/>
            <person name="Iwayanagi T."/>
            <person name="Wagatsuma M."/>
            <person name="Shiratori A."/>
            <person name="Sudo H."/>
            <person name="Hosoiri T."/>
            <person name="Kaku Y."/>
            <person name="Kodaira H."/>
            <person name="Kondo H."/>
            <person name="Sugawara M."/>
            <person name="Takahashi M."/>
            <person name="Kanda K."/>
            <person name="Yokoi T."/>
            <person name="Furuya T."/>
            <person name="Kikkawa E."/>
            <person name="Omura Y."/>
            <person name="Abe K."/>
            <person name="Kamihara K."/>
            <person name="Katsuta N."/>
            <person name="Sato K."/>
            <person name="Tanikawa M."/>
            <person name="Yamazaki M."/>
            <person name="Ninomiya K."/>
            <person name="Ishibashi T."/>
            <person name="Yamashita H."/>
            <person name="Murakawa K."/>
            <person name="Fujimori K."/>
            <person name="Tanai H."/>
            <person name="Kimata M."/>
            <person name="Watanabe M."/>
            <person name="Hiraoka S."/>
            <person name="Chiba Y."/>
            <person name="Ishida S."/>
            <person name="Ono Y."/>
            <person name="Takiguchi S."/>
            <person name="Watanabe S."/>
            <person name="Yosida M."/>
            <person name="Hotuta T."/>
            <person name="Kusano J."/>
            <person name="Kanehori K."/>
            <person name="Takahashi-Fujii A."/>
            <person name="Hara H."/>
            <person name="Tanase T.-O."/>
            <person name="Nomura Y."/>
            <person name="Togiya S."/>
            <person name="Komai F."/>
            <person name="Hara R."/>
            <person name="Takeuchi K."/>
            <person name="Arita M."/>
            <person name="Imose N."/>
            <person name="Musashino K."/>
            <person name="Yuuki H."/>
            <person name="Oshima A."/>
            <person name="Sasaki N."/>
            <person name="Aotsuka S."/>
            <person name="Yoshikawa Y."/>
            <person name="Matsunawa H."/>
            <person name="Ichihara T."/>
            <person name="Shiohata N."/>
            <person name="Sano S."/>
            <person name="Moriya S."/>
            <person name="Momiyama H."/>
            <person name="Satoh N."/>
            <person name="Takami S."/>
            <person name="Terashima Y."/>
            <person name="Suzuki O."/>
            <person name="Nakagawa S."/>
            <person name="Senoh A."/>
            <person name="Mizoguchi H."/>
            <person name="Goto Y."/>
            <person name="Shimizu F."/>
            <person name="Wakebe H."/>
            <person name="Hishigaki H."/>
            <person name="Watanabe T."/>
            <person name="Sugiyama A."/>
            <person name="Takemoto M."/>
            <person name="Kawakami B."/>
            <person name="Yamazaki M."/>
            <person name="Watanabe K."/>
            <person name="Kumagai A."/>
            <person name="Itakura S."/>
            <person name="Fukuzumi Y."/>
            <person name="Fujimori Y."/>
            <person name="Komiyama M."/>
            <person name="Tashiro H."/>
            <person name="Tanigami A."/>
            <person name="Fujiwara T."/>
            <person name="Ono T."/>
            <person name="Yamada K."/>
            <person name="Fujii Y."/>
            <person name="Ozaki K."/>
            <person name="Hirao M."/>
            <person name="Ohmori Y."/>
            <person name="Kawabata A."/>
            <person name="Hikiji T."/>
            <person name="Kobatake N."/>
            <person name="Inagaki H."/>
            <person name="Ikema Y."/>
            <person name="Okamoto S."/>
            <person name="Okitani R."/>
            <person name="Kawakami T."/>
            <person name="Noguchi S."/>
            <person name="Itoh T."/>
            <person name="Shigeta K."/>
            <person name="Senba T."/>
            <person name="Matsumura K."/>
            <person name="Nakajima Y."/>
            <person name="Mizuno T."/>
            <person name="Morinaga M."/>
            <person name="Sasaki M."/>
            <person name="Togashi T."/>
            <person name="Oyama M."/>
            <person name="Hata H."/>
            <person name="Watanabe M."/>
            <person name="Komatsu T."/>
            <person name="Mizushima-Sugano J."/>
            <person name="Satoh T."/>
            <person name="Shirai Y."/>
            <person name="Takahashi Y."/>
            <person name="Nakagawa K."/>
            <person name="Okumura K."/>
            <person name="Nagase T."/>
            <person name="Nomura N."/>
            <person name="Kikuchi H."/>
            <person name="Masuho Y."/>
            <person name="Yamashita R."/>
            <person name="Nakai K."/>
            <person name="Yada T."/>
            <person name="Nakamura Y."/>
            <person name="Ohara O."/>
            <person name="Isogai T."/>
            <person name="Sugano S."/>
        </authorList>
    </citation>
    <scope>NUCLEOTIDE SEQUENCE [LARGE SCALE MRNA] (ISOFORM 1)</scope>
    <source>
        <tissue>Placenta</tissue>
    </source>
</reference>
<reference key="5">
    <citation type="submission" date="2002-02" db="EMBL/GenBank/DDBJ databases">
        <authorList>
            <consortium name="NIEHS SNPs program"/>
        </authorList>
    </citation>
    <scope>NUCLEOTIDE SEQUENCE [GENOMIC DNA]</scope>
    <scope>VARIANTS ASN-161; SER-168; GLY-235; VAL-285 AND GLN-296</scope>
</reference>
<reference key="6">
    <citation type="journal article" date="2002" name="J. Biol. Chem.">
        <title>Poly(ADP-ribose) polymerase-2 (PARP-2) is required for efficient base excision DNA repair in association with PARP-1 and XRCC1.</title>
        <authorList>
            <person name="Schreiber V."/>
            <person name="Ame J.-C."/>
            <person name="Dolle P."/>
            <person name="Schultz I."/>
            <person name="Rinaldi B."/>
            <person name="Fraulob V."/>
            <person name="Menissier-de Murcia J."/>
            <person name="de Murcia G.M."/>
        </authorList>
    </citation>
    <scope>INTERACTION WITH PARP1; XRCC1; POLB AND LRIG3</scope>
</reference>
<reference key="7">
    <citation type="journal article" date="2010" name="Trends Biochem. Sci.">
        <title>Toward a unified nomenclature for mammalian ADP-ribosyltransferases.</title>
        <authorList>
            <person name="Hottiger M.O."/>
            <person name="Hassa P.O."/>
            <person name="Luscher B."/>
            <person name="Schuler H."/>
            <person name="Koch-Nolte F."/>
        </authorList>
    </citation>
    <scope>NOMENCLATURE</scope>
</reference>
<reference key="8">
    <citation type="journal article" date="2011" name="BMC Syst. Biol.">
        <title>Initial characterization of the human central proteome.</title>
        <authorList>
            <person name="Burkard T.R."/>
            <person name="Planyavsky M."/>
            <person name="Kaupe I."/>
            <person name="Breitwieser F.P."/>
            <person name="Buerckstuemmer T."/>
            <person name="Bennett K.L."/>
            <person name="Superti-Furga G."/>
            <person name="Colinge J."/>
        </authorList>
    </citation>
    <scope>IDENTIFICATION BY MASS SPECTROMETRY [LARGE SCALE ANALYSIS]</scope>
</reference>
<reference key="9">
    <citation type="journal article" date="2011" name="Sci. Signal.">
        <title>System-wide temporal characterization of the proteome and phosphoproteome of human embryonic stem cell differentiation.</title>
        <authorList>
            <person name="Rigbolt K.T."/>
            <person name="Prokhorova T.A."/>
            <person name="Akimov V."/>
            <person name="Henningsen J."/>
            <person name="Johansen P.T."/>
            <person name="Kratchmarova I."/>
            <person name="Kassem M."/>
            <person name="Mann M."/>
            <person name="Olsen J.V."/>
            <person name="Blagoev B."/>
        </authorList>
    </citation>
    <scope>PHOSPHORYLATION [LARGE SCALE ANALYSIS] AT SER-226 AND SER-232</scope>
    <scope>IDENTIFICATION BY MASS SPECTROMETRY [LARGE SCALE ANALYSIS]</scope>
</reference>
<reference key="10">
    <citation type="journal article" date="2016" name="Mol. Cell">
        <title>HPF1/C4orf27 is a PARP-1-interacting protein that regulates PARP-1 ADP-ribosylation activity.</title>
        <authorList>
            <person name="Gibbs-Seymour I."/>
            <person name="Fontana P."/>
            <person name="Rack J.G."/>
            <person name="Ahel I."/>
        </authorList>
    </citation>
    <scope>INTERACTION WITH HPF1</scope>
</reference>
<reference key="11">
    <citation type="journal article" date="2017" name="Mol. Cell">
        <title>Serine ADP-ribosylation depends on HPF1.</title>
        <authorList>
            <person name="Bonfiglio J.J."/>
            <person name="Fontana P."/>
            <person name="Zhang Q."/>
            <person name="Colby T."/>
            <person name="Gibbs-Seymour I."/>
            <person name="Atanassov I."/>
            <person name="Bartlett E."/>
            <person name="Zaja R."/>
            <person name="Ahel I."/>
            <person name="Matic I."/>
        </authorList>
    </citation>
    <scope>FUNCTION</scope>
    <scope>CATALYTIC ACTIVITY</scope>
    <scope>INTERACTION WITH HPF1</scope>
</reference>
<reference key="12">
    <citation type="journal article" date="2014" name="Nat. Commun.">
        <title>Family-wide analysis of poly(ADP-ribose) polymerase activity.</title>
        <authorList>
            <person name="Vyas S."/>
            <person name="Matic I."/>
            <person name="Uchima L."/>
            <person name="Rood J."/>
            <person name="Zaja R."/>
            <person name="Hay R.T."/>
            <person name="Ahel I."/>
            <person name="Chang P."/>
        </authorList>
    </citation>
    <scope>FUNCTION</scope>
    <scope>CATALYTIC ACTIVITY</scope>
</reference>
<reference key="13">
    <citation type="journal article" date="2016" name="Nucleic Acids Res.">
        <title>Poly(ADP-ribose) polymerases covalently modify strand break termini in DNA fragments in vitro.</title>
        <authorList>
            <person name="Talhaoui I."/>
            <person name="Lebedeva N.A."/>
            <person name="Zarkovic G."/>
            <person name="Saint-Pierre C."/>
            <person name="Kutuzov M.M."/>
            <person name="Sukhanova M.V."/>
            <person name="Matkarimov B.T."/>
            <person name="Gasparutto D."/>
            <person name="Saparbaev M.K."/>
            <person name="Lavrik O.I."/>
            <person name="Ishchenko A.A."/>
        </authorList>
    </citation>
    <scope>FUNCTION</scope>
    <scope>CATALYTIC ACTIVITY</scope>
</reference>
<reference key="14">
    <citation type="journal article" date="2018" name="Nat. Commun.">
        <title>PARP2 mediates branched poly ADP-ribosylation in response to DNA damage.</title>
        <authorList>
            <person name="Chen Q."/>
            <person name="Kassab M.A."/>
            <person name="Dantzer F."/>
            <person name="Yu X."/>
        </authorList>
    </citation>
    <scope>FUNCTION</scope>
    <scope>CATALYTIC ACTIVITY</scope>
    <scope>SUBCELLULAR LOCATION</scope>
    <scope>ACTIVE SITE</scope>
    <scope>MUTAGENESIS OF GLU-558</scope>
</reference>
<reference key="15">
    <citation type="journal article" date="2018" name="Nucleic Acids Res.">
        <title>Characterization of DNA ADP-ribosyltransferase activities of PARP2 and PARP3: new insights into DNA ADP-ribosylation.</title>
        <authorList>
            <person name="Zarkovic G."/>
            <person name="Belousova E.A."/>
            <person name="Talhaoui I."/>
            <person name="Saint-Pierre C."/>
            <person name="Kutuzov M.M."/>
            <person name="Matkarimov B.T."/>
            <person name="Biard D."/>
            <person name="Gasparutto D."/>
            <person name="Lavrik O.I."/>
            <person name="Ishchenko A.A."/>
        </authorList>
    </citation>
    <scope>FUNCTION</scope>
    <scope>CATALYTIC ACTIVITY</scope>
</reference>
<reference key="16">
    <citation type="journal article" date="2020" name="Mol. Cell">
        <title>The oncogenic helicase ALC1 regulates PARP inhibitor potency by trapping PARP2 at DNA breaks.</title>
        <authorList>
            <person name="Blessing C."/>
            <person name="Mandemaker I.K."/>
            <person name="Gonzalez-Leal C."/>
            <person name="Preisser J."/>
            <person name="Schomburg A."/>
            <person name="Ladurner A.G."/>
        </authorList>
    </citation>
    <scope>ACTIVITY REGULATION</scope>
    <scope>MUTAGENESIS OF GLU-558</scope>
</reference>
<reference key="17">
    <citation type="journal article" date="2021" name="Commun. Biol.">
        <title>Dual function of HPF1 in the modulation of PARP1 and PARP2 activities.</title>
        <authorList>
            <person name="Kurgina T.A."/>
            <person name="Moor N.A."/>
            <person name="Kutuzov M.M."/>
            <person name="Naumenko K.N."/>
            <person name="Ukraintsev A.A."/>
            <person name="Lavrik O.I."/>
        </authorList>
    </citation>
    <scope>FUNCTION</scope>
</reference>
<reference key="18">
    <citation type="journal article" date="2021" name="Elife">
        <title>Structure and dynamics of the chromatin remodeler ALC1 bound to a PARylated nucleosome.</title>
        <authorList>
            <person name="Bacic L."/>
            <person name="Gaullier G."/>
            <person name="Sabantsev A."/>
            <person name="Lehmann L.C."/>
            <person name="Brackmann K."/>
            <person name="Dimakou D."/>
            <person name="Halic M."/>
            <person name="Hewitt G."/>
            <person name="Boulton S.J."/>
            <person name="Deindl S."/>
        </authorList>
    </citation>
    <scope>FUNCTION</scope>
</reference>
<reference key="19">
    <citation type="journal article" date="2021" name="Elife">
        <title>Serine ADP-ribosylation marks nucleosomes for ALC1-dependent chromatin remodeling.</title>
        <authorList>
            <person name="Mohapatra J."/>
            <person name="Tashiro K."/>
            <person name="Beckner R.L."/>
            <person name="Sierra J."/>
            <person name="Kilgore J.A."/>
            <person name="Williams N.S."/>
            <person name="Liszczak G."/>
        </authorList>
    </citation>
    <scope>FUNCTION</scope>
</reference>
<reference key="20">
    <citation type="journal article" date="2021" name="Nat. Commun.">
        <title>HPF1 dynamically controls the PARP1/2 balance between initiating and elongating ADP-ribose modifications.</title>
        <authorList>
            <person name="Langelier M.F."/>
            <person name="Billur R."/>
            <person name="Sverzhinsky A."/>
            <person name="Black B.E."/>
            <person name="Pascal J.M."/>
        </authorList>
    </citation>
    <scope>FUNCTION</scope>
</reference>
<reference key="21">
    <citation type="journal article" date="2022" name="Nucleic Acids Res.">
        <title>PARP inhibitors trap PARP2 and alter the mode of recruitment of PARP2 at DNA damage sites.</title>
        <authorList>
            <person name="Lin X."/>
            <person name="Jiang W."/>
            <person name="Rudolph J."/>
            <person name="Lee B.J."/>
            <person name="Luger K."/>
            <person name="Zha S."/>
        </authorList>
    </citation>
    <scope>ACTIVITY REGULATION</scope>
    <scope>SUBCELLULAR LOCATION</scope>
    <scope>MUTAGENESIS OF ARG-153 AND HIS-428</scope>
</reference>
<reference key="22">
    <citation type="journal article" date="2010" name="Biochemistry">
        <title>Crystal structure of the catalytic domain of human PARP2 in complex with PARP inhibitor ABT-888.</title>
        <authorList>
            <person name="Karlberg T."/>
            <person name="Hammarstrom M."/>
            <person name="Schutz P."/>
            <person name="Svensson L."/>
            <person name="Schuler H."/>
        </authorList>
    </citation>
    <scope>X-RAY CRYSTALLOGRAPHY (1.95 ANGSTROMS) OF 235-579 IN COMPLEX WITH PARP INHIBITORS</scope>
    <scope>SUBUNIT</scope>
</reference>
<reference evidence="39" key="23">
    <citation type="journal article" date="2015" name="Mol. Cell">
        <title>PARP-1 activation requires local unfolding of an autoinhibitory domain.</title>
        <authorList>
            <person name="Dawicki-McKenna J.M."/>
            <person name="Langelier M.F."/>
            <person name="DeNizio J.E."/>
            <person name="Riccio A.A."/>
            <person name="Cao C.D."/>
            <person name="Karch K.R."/>
            <person name="McCauley M."/>
            <person name="Steffen J.D."/>
            <person name="Black B.E."/>
            <person name="Pascal J.M."/>
        </authorList>
    </citation>
    <scope>X-RAY CRYSTALLOGRAPHY (2.70 ANGSTROMS) OF 348-583</scope>
</reference>
<reference evidence="38" key="24">
    <citation type="journal article" date="2016" name="Nucleic Acids Res.">
        <title>PARP-2 domain requirements for DNA damage-dependent activation and localization to sites of DNA damage.</title>
        <authorList>
            <person name="Riccio A.A."/>
            <person name="Cingolani G."/>
            <person name="Pascal J.M."/>
        </authorList>
    </citation>
    <scope>X-RAY CRYSTALLOGRAPHY (1.90 ANGSTROMS) OF 1-91</scope>
    <scope>SUBCELLULAR LOCATION</scope>
    <scope>NUCLEAR LOCALIZATION SIGNAL</scope>
    <scope>DOMAIN</scope>
    <scope>ACTIVE SITE</scope>
    <scope>MUTAGENESIS OF 21-LYS-ARG-22; 37-LYS-LYS-38; ASN-129; TYR-201 AND GLU-558</scope>
</reference>
<reference evidence="40 41 42" key="25">
    <citation type="journal article" date="2018" name="Nucleic Acids Res.">
        <title>Structural basis for DNA break recognition by ARTD2/PARP2.</title>
        <authorList>
            <person name="Obaji E."/>
            <person name="Haikarainen T."/>
            <person name="Lehtioe L."/>
        </authorList>
    </citation>
    <scope>X-RAY CRYSTALLOGRAPHY (2.20 ANGSTROMS) OF 90-218</scope>
    <scope>FUNCTION</scope>
    <scope>CATALYTIC ACTIVITY</scope>
    <scope>SUBCELLULAR LOCATION</scope>
    <scope>DOMAIN</scope>
    <scope>MUTAGENESIS OF ASN-127; ASN-128; LYS-130; TYR-132; TRP-151; ARG-153; GLN-159; LYS-183 AND TYR-201</scope>
</reference>
<reference evidence="43" key="26">
    <citation type="journal article" date="2020" name="Nature">
        <title>HPF1 completes the PARP active site for DNA damage-induced ADP-ribosylation.</title>
        <authorList>
            <person name="Suskiewicz M.J."/>
            <person name="Zobel F."/>
            <person name="Ogden T.E.H."/>
            <person name="Fontana P."/>
            <person name="Ariza A."/>
            <person name="Yang J.C."/>
            <person name="Zhu K."/>
            <person name="Bracken L."/>
            <person name="Hawthorne W.J."/>
            <person name="Ahel D."/>
            <person name="Neuhaus D."/>
            <person name="Ahel I."/>
        </authorList>
    </citation>
    <scope>X-RAY CRYSTALLOGRAPHY (2.96 ANGSTROMS) OF 323-583 IN COMPLEX WITH NAD ANALOG AND HPF1</scope>
    <scope>FUNCTION</scope>
    <scope>CATALYTIC ACTIVITY</scope>
    <scope>ACTIVE SITE</scope>
    <scope>INTERACTION WITH HPF1</scope>
    <scope>MUTAGENESIS OF HIS-394 AND 582-LEU-TRP-583</scope>
</reference>
<reference evidence="45 46 47" key="27">
    <citation type="journal article" date="2020" name="Nature">
        <title>Bridging of DNA breaks activates PARP2-HPF1 to modify chromatin.</title>
        <authorList>
            <person name="Bilokapic S."/>
            <person name="Suskiewicz M.J."/>
            <person name="Ahel I."/>
            <person name="Halic M."/>
        </authorList>
    </citation>
    <scope>STRUCTURE BY ELECTRON MICROSCOPY (3.90 ANGSTROMS) IN COMPLEX WITH NUCLEOSOME AND HPF1</scope>
    <scope>FUNCTION</scope>
    <scope>CATALYTIC ACTIVITY</scope>
    <scope>SUBCELLULAR LOCATION</scope>
    <scope>INTERACTION WITH HPF1</scope>
    <scope>DOMAIN</scope>
    <scope>ADP-RIBOSYLATION AND NUCLEOSOME CORE COMPLEX</scope>
    <scope>MUTAGENESIS OF ARG-153 AND VAL-154</scope>
</reference>
<reference evidence="44" key="28">
    <citation type="journal article" date="2020" name="PLoS ONE">
        <title>Bridging of nucleosome-proximal DNA double-strand breaks by PARP2 enhances its interaction with HPF1.</title>
        <authorList>
            <person name="Gaullier G."/>
            <person name="Roberts G."/>
            <person name="Muthurajan U.M."/>
            <person name="Bowerman S."/>
            <person name="Rudolph J."/>
            <person name="Mahadevan J."/>
            <person name="Jha A."/>
            <person name="Rae P.S."/>
            <person name="Luger K."/>
        </authorList>
    </citation>
    <scope>STRUCTURE BY ELECTRON MICROSCOPY (10.50 ANGSTROMS) IN COMPLEX WITH HPF1 AND NUCLEOSOME CORE COMPLEX</scope>
    <scope>INTERACTION WITH HPF1</scope>
    <scope>SUBCELLULAR LOCATION</scope>
    <scope>DOMAIN</scope>
    <scope>MUTAGENESIS OF 125-GLN-PHE-126</scope>
</reference>
<reference evidence="48" key="29">
    <citation type="journal article" date="2021" name="Nat. Commun.">
        <title>Activation of PARP2/ARTD2 by DNA damage induces conformational changes relieving enzyme autoinhibition.</title>
        <authorList>
            <person name="Obaji E."/>
            <person name="Maksimainen M.M."/>
            <person name="Galera-Prat A."/>
            <person name="Lehtioe L."/>
        </authorList>
    </citation>
    <scope>X-RAY CRYSTALLOGRAPHY (2.80 ANGSTROMS) OF 90-583 IN COMPLEX WITH DNA</scope>
    <scope>FUNCTION</scope>
    <scope>CATALYTIC ACTIVITY</scope>
    <scope>ACTIVITY REGULATION</scope>
    <scope>DOMAIN</scope>
    <scope>INTERACTION WITH HPF1</scope>
    <scope>MUTAGENESIS OF ASN-129; ARG-153; TYR-201; GLU-286 AND GLY-338</scope>
</reference>